<name>PTASE_MBVLF</name>
<proteinExistence type="inferred from homology"/>
<keyword id="KW-1043">Host membrane</keyword>
<keyword id="KW-0378">Hydrolase</keyword>
<keyword id="KW-0472">Membrane</keyword>
<keyword id="KW-0645">Protease</keyword>
<keyword id="KW-1185">Reference proteome</keyword>
<keyword id="KW-0720">Serine protease</keyword>
<keyword id="KW-0812">Transmembrane</keyword>
<keyword id="KW-1133">Transmembrane helix</keyword>
<gene>
    <name type="ORF">ORF2</name>
</gene>
<dbReference type="EC" id="3.4.21.-"/>
<dbReference type="EMBL" id="U07551">
    <property type="protein sequence ID" value="AAA53089.1"/>
    <property type="molecule type" value="Genomic_RNA"/>
</dbReference>
<dbReference type="RefSeq" id="NP_042509.1">
    <property type="nucleotide sequence ID" value="NC_001633.1"/>
</dbReference>
<dbReference type="SMR" id="Q9YPD6"/>
<dbReference type="KEGG" id="vg:1497108"/>
<dbReference type="Proteomes" id="UP000006824">
    <property type="component" value="Segment"/>
</dbReference>
<dbReference type="GO" id="GO:0033644">
    <property type="term" value="C:host cell membrane"/>
    <property type="evidence" value="ECO:0007669"/>
    <property type="project" value="UniProtKB-SubCell"/>
</dbReference>
<dbReference type="GO" id="GO:0016020">
    <property type="term" value="C:membrane"/>
    <property type="evidence" value="ECO:0007669"/>
    <property type="project" value="UniProtKB-KW"/>
</dbReference>
<dbReference type="GO" id="GO:0004252">
    <property type="term" value="F:serine-type endopeptidase activity"/>
    <property type="evidence" value="ECO:0007669"/>
    <property type="project" value="InterPro"/>
</dbReference>
<dbReference type="GO" id="GO:0006508">
    <property type="term" value="P:proteolysis"/>
    <property type="evidence" value="ECO:0007669"/>
    <property type="project" value="UniProtKB-KW"/>
</dbReference>
<dbReference type="GO" id="GO:0016032">
    <property type="term" value="P:viral process"/>
    <property type="evidence" value="ECO:0007669"/>
    <property type="project" value="InterPro"/>
</dbReference>
<dbReference type="Gene3D" id="2.40.10.10">
    <property type="entry name" value="Trypsin-like serine proteases"/>
    <property type="match status" value="2"/>
</dbReference>
<dbReference type="InterPro" id="IPR009003">
    <property type="entry name" value="Peptidase_S1_PA"/>
</dbReference>
<dbReference type="InterPro" id="IPR043504">
    <property type="entry name" value="Peptidase_S1_PA_chymotrypsin"/>
</dbReference>
<dbReference type="InterPro" id="IPR000382">
    <property type="entry name" value="Peptidase_S39B_luteovirus"/>
</dbReference>
<dbReference type="Pfam" id="PF02122">
    <property type="entry name" value="Peptidase_S39"/>
    <property type="match status" value="1"/>
</dbReference>
<dbReference type="SUPFAM" id="SSF50494">
    <property type="entry name" value="Trypsin-like serine proteases"/>
    <property type="match status" value="1"/>
</dbReference>
<dbReference type="PROSITE" id="PS51868">
    <property type="entry name" value="PEPTIDASE_S39"/>
    <property type="match status" value="1"/>
</dbReference>
<sequence length="657" mass="73415">MSKYLATSVRLCLMVCIVGWLLMPSYKELDGWCSSLSSLERDKSNWLLTGLSTWFCIVPSGTDQSSLVSYFSPLEKLSKFVQDLDLDFVKLWWLETITLINTLNTTEKLLSGVTFSVVLWYPRILVTVLMLVWKLWFPVRFLVVASSLLCLRILVWPFEVIADVILETCAWFTRKYHKLMDVIEDLMMIPQRVMEWCSGNTAKMVVPTVASCVSESIESKLDRILMALGRKGTVLEAAQPGSDFVECEQWPNGLVAIRRHDGRIVGMGFLVVLNGKWRLVTAAHVARECKRGIMLSAGIDSKTVTFQDLDVVLQTQVDACIMNVPAGTAASLGVRKVVINRTPSESKVVRTYGYNSGKFCMSEGLVGTTSANMGFRHGCSTLRGWSGTPIYRDNKVVGIHSRCNGIYENFGLSLDLLVGRLESEETDRYARTMEEFNTEDRPVTPPMEFSWEFEEKFERVRSTRKSFARIESEVATFTATKLSGFDWTDDAPMDFDELPVFESTMVSVFQERPLGGLPISNGNKAEEKKITSEALEPSKSSTPEAAKHTRRRRRNKKKSKNSETGHGPEEQSQQQSRPSSPIPDDSAPVSSPPVSPPSTGSVPKSWTQAYTQKLVLLLGSMDGQSKEKVDLAILEAKSFASALFPPSKPKSSEESEK</sequence>
<comment type="function">
    <text evidence="4">Putative serine protease.</text>
</comment>
<comment type="subcellular location">
    <subcellularLocation>
        <location evidence="4">Host membrane</location>
        <topology evidence="4">Multi-pass membrane protein</topology>
    </subcellularLocation>
</comment>
<comment type="similarity">
    <text evidence="4">Belongs to the peptidase S39B family.</text>
</comment>
<evidence type="ECO:0000255" key="1"/>
<evidence type="ECO:0000255" key="2">
    <source>
        <dbReference type="PROSITE-ProRule" id="PRU01216"/>
    </source>
</evidence>
<evidence type="ECO:0000256" key="3">
    <source>
        <dbReference type="SAM" id="MobiDB-lite"/>
    </source>
</evidence>
<evidence type="ECO:0000305" key="4"/>
<reference key="1">
    <citation type="journal article" date="1994" name="Virology">
        <title>The nucleotide sequence and genome organization of mushroom bacilliform virus: a single-stranded RNA virus of Agaricus bisporus (Lange) Imbach.</title>
        <authorList>
            <person name="Revill P.A."/>
            <person name="Davidson A.D."/>
            <person name="Wright P.J."/>
        </authorList>
    </citation>
    <scope>NUCLEOTIDE SEQUENCE [GENOMIC RNA]</scope>
</reference>
<organism>
    <name type="scientific">Mushroom bacilliform virus (isolate Australia/AUS LF-1)</name>
    <name type="common">MBV</name>
    <dbReference type="NCBI Taxonomy" id="650482"/>
    <lineage>
        <taxon>Viruses</taxon>
        <taxon>Riboviria</taxon>
        <taxon>Orthornavirae</taxon>
        <taxon>Pisuviricota</taxon>
        <taxon>Pisoniviricetes</taxon>
        <taxon>Sobelivirales</taxon>
        <taxon>Barnaviridae</taxon>
        <taxon>Barnavirus</taxon>
        <taxon>Mushroom bacilliform virus</taxon>
    </lineage>
</organism>
<organismHost>
    <name type="scientific">Agaricus bisporus</name>
    <name type="common">White button mushroom</name>
    <dbReference type="NCBI Taxonomy" id="5341"/>
</organismHost>
<accession>Q9YPD6</accession>
<protein>
    <recommendedName>
        <fullName>Putative serine protease</fullName>
        <ecNumber>3.4.21.-</ecNumber>
    </recommendedName>
</protein>
<feature type="chain" id="PRO_0000402445" description="Putative serine protease">
    <location>
        <begin position="1"/>
        <end position="657"/>
    </location>
</feature>
<feature type="transmembrane region" description="Helical" evidence="1">
    <location>
        <begin position="4"/>
        <end position="24"/>
    </location>
</feature>
<feature type="transmembrane region" description="Helical" evidence="1">
    <location>
        <begin position="46"/>
        <end position="62"/>
    </location>
</feature>
<feature type="transmembrane region" description="Helical" evidence="1">
    <location>
        <begin position="109"/>
        <end position="131"/>
    </location>
</feature>
<feature type="domain" description="Peptidase S39" evidence="2">
    <location>
        <begin position="239"/>
        <end position="434"/>
    </location>
</feature>
<feature type="region of interest" description="Disordered" evidence="3">
    <location>
        <begin position="513"/>
        <end position="605"/>
    </location>
</feature>
<feature type="compositionally biased region" description="Basic residues" evidence="3">
    <location>
        <begin position="548"/>
        <end position="559"/>
    </location>
</feature>
<feature type="compositionally biased region" description="Basic and acidic residues" evidence="3">
    <location>
        <begin position="560"/>
        <end position="569"/>
    </location>
</feature>
<feature type="compositionally biased region" description="Low complexity" evidence="3">
    <location>
        <begin position="571"/>
        <end position="589"/>
    </location>
</feature>
<feature type="active site" description="For protease activity" evidence="2">
    <location>
        <position position="284"/>
    </location>
</feature>
<feature type="active site" description="For protease activity" evidence="2">
    <location>
        <position position="318"/>
    </location>
</feature>
<feature type="active site" description="For protease activity" evidence="2">
    <location>
        <position position="386"/>
    </location>
</feature>